<feature type="chain" id="PRO_1000065734" description="N-succinylarginine dihydrolase">
    <location>
        <begin position="1"/>
        <end position="446"/>
    </location>
</feature>
<feature type="active site" evidence="1">
    <location>
        <position position="174"/>
    </location>
</feature>
<feature type="active site" evidence="1">
    <location>
        <position position="249"/>
    </location>
</feature>
<feature type="active site" description="Nucleophile" evidence="1">
    <location>
        <position position="370"/>
    </location>
</feature>
<feature type="binding site" evidence="1">
    <location>
        <begin position="19"/>
        <end position="28"/>
    </location>
    <ligand>
        <name>substrate</name>
    </ligand>
</feature>
<feature type="binding site" evidence="1">
    <location>
        <position position="110"/>
    </location>
    <ligand>
        <name>substrate</name>
    </ligand>
</feature>
<feature type="binding site" evidence="1">
    <location>
        <begin position="137"/>
        <end position="138"/>
    </location>
    <ligand>
        <name>substrate</name>
    </ligand>
</feature>
<feature type="binding site" evidence="1">
    <location>
        <position position="213"/>
    </location>
    <ligand>
        <name>substrate</name>
    </ligand>
</feature>
<feature type="binding site" evidence="1">
    <location>
        <position position="251"/>
    </location>
    <ligand>
        <name>substrate</name>
    </ligand>
</feature>
<feature type="binding site" evidence="1">
    <location>
        <position position="364"/>
    </location>
    <ligand>
        <name>substrate</name>
    </ligand>
</feature>
<organism>
    <name type="scientific">Serratia proteamaculans (strain 568)</name>
    <dbReference type="NCBI Taxonomy" id="399741"/>
    <lineage>
        <taxon>Bacteria</taxon>
        <taxon>Pseudomonadati</taxon>
        <taxon>Pseudomonadota</taxon>
        <taxon>Gammaproteobacteria</taxon>
        <taxon>Enterobacterales</taxon>
        <taxon>Yersiniaceae</taxon>
        <taxon>Serratia</taxon>
    </lineage>
</organism>
<proteinExistence type="inferred from homology"/>
<gene>
    <name evidence="1" type="primary">astB</name>
    <name type="ordered locus">Spro_2841</name>
</gene>
<reference key="1">
    <citation type="submission" date="2007-09" db="EMBL/GenBank/DDBJ databases">
        <title>Complete sequence of chromosome of Serratia proteamaculans 568.</title>
        <authorList>
            <consortium name="US DOE Joint Genome Institute"/>
            <person name="Copeland A."/>
            <person name="Lucas S."/>
            <person name="Lapidus A."/>
            <person name="Barry K."/>
            <person name="Glavina del Rio T."/>
            <person name="Dalin E."/>
            <person name="Tice H."/>
            <person name="Pitluck S."/>
            <person name="Chain P."/>
            <person name="Malfatti S."/>
            <person name="Shin M."/>
            <person name="Vergez L."/>
            <person name="Schmutz J."/>
            <person name="Larimer F."/>
            <person name="Land M."/>
            <person name="Hauser L."/>
            <person name="Kyrpides N."/>
            <person name="Kim E."/>
            <person name="Taghavi S."/>
            <person name="Newman L."/>
            <person name="Vangronsveld J."/>
            <person name="van der Lelie D."/>
            <person name="Richardson P."/>
        </authorList>
    </citation>
    <scope>NUCLEOTIDE SEQUENCE [LARGE SCALE GENOMIC DNA]</scope>
    <source>
        <strain>568</strain>
    </source>
</reference>
<accession>A8GFQ2</accession>
<protein>
    <recommendedName>
        <fullName evidence="1">N-succinylarginine dihydrolase</fullName>
        <ecNumber evidence="1">3.5.3.23</ecNumber>
    </recommendedName>
</protein>
<sequence length="446" mass="49410">MSGYEVNFDGLVGLTHHYAGLSFGNEASTQHQNSVSNPKLAAKQGLLKMKALADLGFQQGVLPPQERPHVPMLRKLGFSGSDESVLAQAMQQSPRLLSALSSASCMWTANAATVSPSADSADGKVHFTAANLNNKFHRAIEAETTSGVLRAMFNDPRHFAHHEALPQVALFGDEGAANHNRLGGDYGKRSVQMFVYGRQEFGGEIAPTRYPARQTREAGEAIARLHQLDEQHTVFVQQNPEVIDQGVFHNDVIAVSNQNVLFHHQQAFYRQQQALDEVRRKMATLDSELVAIEVPTTRVSVADAVATYLFNSQILTKPNGKMMIVVPEESRQHSGVWSYLSEMVASGGPIDEIKVFDLRESMRNGGGPACLRLRVALNEQELRAVNPRVMMNDSLFITLNEWVDRYYRDRLTQNDLADPQLLREGREALDSLTTILGLGSVYPFQQ</sequence>
<name>ASTB_SERP5</name>
<dbReference type="EC" id="3.5.3.23" evidence="1"/>
<dbReference type="EMBL" id="CP000826">
    <property type="protein sequence ID" value="ABV41942.1"/>
    <property type="molecule type" value="Genomic_DNA"/>
</dbReference>
<dbReference type="SMR" id="A8GFQ2"/>
<dbReference type="STRING" id="399741.Spro_2841"/>
<dbReference type="KEGG" id="spe:Spro_2841"/>
<dbReference type="eggNOG" id="COG3724">
    <property type="taxonomic scope" value="Bacteria"/>
</dbReference>
<dbReference type="HOGENOM" id="CLU_053835_0_0_6"/>
<dbReference type="OrthoDB" id="248552at2"/>
<dbReference type="UniPathway" id="UPA00185">
    <property type="reaction ID" value="UER00280"/>
</dbReference>
<dbReference type="GO" id="GO:0009015">
    <property type="term" value="F:N-succinylarginine dihydrolase activity"/>
    <property type="evidence" value="ECO:0007669"/>
    <property type="project" value="UniProtKB-UniRule"/>
</dbReference>
<dbReference type="GO" id="GO:0019544">
    <property type="term" value="P:arginine catabolic process to glutamate"/>
    <property type="evidence" value="ECO:0007669"/>
    <property type="project" value="UniProtKB-UniRule"/>
</dbReference>
<dbReference type="GO" id="GO:0019545">
    <property type="term" value="P:arginine catabolic process to succinate"/>
    <property type="evidence" value="ECO:0007669"/>
    <property type="project" value="UniProtKB-UniRule"/>
</dbReference>
<dbReference type="Gene3D" id="3.75.10.20">
    <property type="entry name" value="Succinylarginine dihydrolase"/>
    <property type="match status" value="1"/>
</dbReference>
<dbReference type="HAMAP" id="MF_01172">
    <property type="entry name" value="AstB"/>
    <property type="match status" value="1"/>
</dbReference>
<dbReference type="InterPro" id="IPR037031">
    <property type="entry name" value="AstB_sf"/>
</dbReference>
<dbReference type="InterPro" id="IPR007079">
    <property type="entry name" value="SuccinylArg_d-Hdrlase_AstB"/>
</dbReference>
<dbReference type="NCBIfam" id="TIGR03241">
    <property type="entry name" value="arg_catab_astB"/>
    <property type="match status" value="1"/>
</dbReference>
<dbReference type="NCBIfam" id="NF009789">
    <property type="entry name" value="PRK13281.1"/>
    <property type="match status" value="1"/>
</dbReference>
<dbReference type="PANTHER" id="PTHR30420">
    <property type="entry name" value="N-SUCCINYLARGININE DIHYDROLASE"/>
    <property type="match status" value="1"/>
</dbReference>
<dbReference type="PANTHER" id="PTHR30420:SF2">
    <property type="entry name" value="N-SUCCINYLARGININE DIHYDROLASE"/>
    <property type="match status" value="1"/>
</dbReference>
<dbReference type="Pfam" id="PF04996">
    <property type="entry name" value="AstB"/>
    <property type="match status" value="1"/>
</dbReference>
<dbReference type="SUPFAM" id="SSF55909">
    <property type="entry name" value="Pentein"/>
    <property type="match status" value="1"/>
</dbReference>
<comment type="function">
    <text evidence="1">Catalyzes the hydrolysis of N(2)-succinylarginine into N(2)-succinylornithine, ammonia and CO(2).</text>
</comment>
<comment type="catalytic activity">
    <reaction evidence="1">
        <text>N(2)-succinyl-L-arginine + 2 H2O + 2 H(+) = N(2)-succinyl-L-ornithine + 2 NH4(+) + CO2</text>
        <dbReference type="Rhea" id="RHEA:19533"/>
        <dbReference type="ChEBI" id="CHEBI:15377"/>
        <dbReference type="ChEBI" id="CHEBI:15378"/>
        <dbReference type="ChEBI" id="CHEBI:16526"/>
        <dbReference type="ChEBI" id="CHEBI:28938"/>
        <dbReference type="ChEBI" id="CHEBI:58241"/>
        <dbReference type="ChEBI" id="CHEBI:58514"/>
        <dbReference type="EC" id="3.5.3.23"/>
    </reaction>
</comment>
<comment type="pathway">
    <text evidence="1">Amino-acid degradation; L-arginine degradation via AST pathway; L-glutamate and succinate from L-arginine: step 2/5.</text>
</comment>
<comment type="subunit">
    <text evidence="1">Homodimer.</text>
</comment>
<comment type="similarity">
    <text evidence="1">Belongs to the succinylarginine dihydrolase family.</text>
</comment>
<evidence type="ECO:0000255" key="1">
    <source>
        <dbReference type="HAMAP-Rule" id="MF_01172"/>
    </source>
</evidence>
<keyword id="KW-0056">Arginine metabolism</keyword>
<keyword id="KW-0378">Hydrolase</keyword>